<reference key="1">
    <citation type="journal article" date="2012" name="Environ. Microbiol.">
        <title>The genome sequence of Desulfatibacillum alkenivorans AK-01: a blueprint for anaerobic alkane oxidation.</title>
        <authorList>
            <person name="Callaghan A.V."/>
            <person name="Morris B.E."/>
            <person name="Pereira I.A."/>
            <person name="McInerney M.J."/>
            <person name="Austin R.N."/>
            <person name="Groves J.T."/>
            <person name="Kukor J.J."/>
            <person name="Suflita J.M."/>
            <person name="Young L.Y."/>
            <person name="Zylstra G.J."/>
            <person name="Wawrik B."/>
        </authorList>
    </citation>
    <scope>NUCLEOTIDE SEQUENCE [LARGE SCALE GENOMIC DNA]</scope>
    <source>
        <strain>AK-01</strain>
    </source>
</reference>
<keyword id="KW-1185">Reference proteome</keyword>
<evidence type="ECO:0000255" key="1">
    <source>
        <dbReference type="HAMAP-Rule" id="MF_01503"/>
    </source>
</evidence>
<evidence type="ECO:0000305" key="2"/>
<protein>
    <recommendedName>
        <fullName evidence="1">Putative regulatory protein Dalk_1931</fullName>
    </recommendedName>
</protein>
<organism>
    <name type="scientific">Desulfatibacillum aliphaticivorans</name>
    <dbReference type="NCBI Taxonomy" id="218208"/>
    <lineage>
        <taxon>Bacteria</taxon>
        <taxon>Pseudomonadati</taxon>
        <taxon>Thermodesulfobacteriota</taxon>
        <taxon>Desulfobacteria</taxon>
        <taxon>Desulfobacterales</taxon>
        <taxon>Desulfatibacillaceae</taxon>
        <taxon>Desulfatibacillum</taxon>
    </lineage>
</organism>
<sequence>MLNIGFGNRVAAHRVVAIVTPNTSPMKRLKDEAKKAGRLVDATCGRKTRAILVMDSNHVILSAIQADTLAQRYAAVKEKKEEGTHNEPE</sequence>
<proteinExistence type="inferred from homology"/>
<comment type="similarity">
    <text evidence="1">Belongs to the RemA family.</text>
</comment>
<comment type="sequence caution" evidence="2">
    <conflict type="erroneous initiation">
        <sequence resource="EMBL-CDS" id="ACL03628"/>
    </conflict>
</comment>
<gene>
    <name type="ordered locus">Dalk_1931</name>
</gene>
<name>Y1931_DESAL</name>
<feature type="chain" id="PRO_0000373783" description="Putative regulatory protein Dalk_1931">
    <location>
        <begin position="1"/>
        <end position="89"/>
    </location>
</feature>
<accession>B8FEV1</accession>
<dbReference type="EMBL" id="CP001322">
    <property type="protein sequence ID" value="ACL03628.1"/>
    <property type="status" value="ALT_INIT"/>
    <property type="molecule type" value="Genomic_DNA"/>
</dbReference>
<dbReference type="RefSeq" id="WP_193345806.1">
    <property type="nucleotide sequence ID" value="NC_011768.1"/>
</dbReference>
<dbReference type="SMR" id="B8FEV1"/>
<dbReference type="KEGG" id="dal:Dalk_1931"/>
<dbReference type="eggNOG" id="COG2052">
    <property type="taxonomic scope" value="Bacteria"/>
</dbReference>
<dbReference type="HOGENOM" id="CLU_2022961_0_0_7"/>
<dbReference type="Proteomes" id="UP000000739">
    <property type="component" value="Chromosome"/>
</dbReference>
<dbReference type="HAMAP" id="MF_01503">
    <property type="entry name" value="RemA"/>
    <property type="match status" value="1"/>
</dbReference>
<dbReference type="InterPro" id="IPR007169">
    <property type="entry name" value="RemA-like"/>
</dbReference>
<dbReference type="NCBIfam" id="NF003315">
    <property type="entry name" value="PRK04323.1"/>
    <property type="match status" value="1"/>
</dbReference>
<dbReference type="PANTHER" id="PTHR38449:SF1">
    <property type="entry name" value="REGULATORY PROTEIN SSL2874-RELATED"/>
    <property type="match status" value="1"/>
</dbReference>
<dbReference type="PANTHER" id="PTHR38449">
    <property type="entry name" value="REGULATORY PROTEIN TM_1690-RELATED"/>
    <property type="match status" value="1"/>
</dbReference>
<dbReference type="Pfam" id="PF04025">
    <property type="entry name" value="RemA-like"/>
    <property type="match status" value="1"/>
</dbReference>